<sequence>MPQFTKEQEKAINDRGHDILVSASAGSGKTTVLVERVLKEILAGTQVDELLVVTFTKAAAEEMKTRIKAALTKEMAKPGVDYRYLREQLNQIDTANISTIDAFCLDVIHRFYYSIELDPSFTILTDDTQATLLKERALREIEGEMLTSKDKAFRHFYDNFAGDRDADSPRDLLLDLYNFAMAKPEYKKWLAQLPQIYEIEDSVIGSKIWQKQIKPYIATKFSKLQEKIASYLTQAIMETKELAKVKESFTLFAQNLNNFVQAVKEDDDYDKQRELLRSCVFTINFRKSKKWDEDLLEFYNEIQSLKDEAKSQVFDTFTSFYAVTEKEQIKIMQESQKIVTAISTAEIKLIERFNQLKRNENLLDYSDMEQLAYQILSQDTSSSQMARDFYQNKFKEILIDEYQDINALQERIIQQIKSEKKNTLFMVGDVKQSIYGFRQAEPSLFLQKYHQFAEDENEHEERILLSDNFRSTEPVTQTVNAVFKSILSTDFGGIDYQKEGQLIFGAKYYPKSLPQASEVIVHEKKNNNEKSENEIDFSEIQMVLARIKQLEDEHVQIFDSNTGKMRDMEYSDIAILTRSRSDNLEIMQEFAKQDIPLFVTDAENYFQTFELTVMMNYLKIIDNPDQDIPLVTVLRSPLFNFDEKELAKIRIKSKNSNFYSALTSYVGTNDVLSKKCKNFLNQLAELRSFATTHRISELIWSIYERTNLLEIMTALPNGEQRRVNLEALYERATSYESAGFKGLYQFINFIDRMRRSQKDLAQPLLTKEAGNAVRLMTIHGSKGLEFPIVFYVGMQHHYQMRDLNGNYIINSDSMGITLREQNYRVDSLVKAMGNITKKQQLLEEEARILYVALTRAKQKLILVGDVPSFNKKVKEWSTELNHAGQLPLINKLSATSPLSFIGPSLRFDRHVAIKLNDITKSIDQSQKILFIDYQDEDTKFIKKDEDTDNQNENTRKSALLTQTVNKLYQFNYPFRDASETTAYQAVSEIKKAFNDPIDAELENSHLLTSTNRYLQPIDTKPNFLYQTKFTGAEIGTATHLILQYYDYTNDSADNLDQEIATLIEQKKLNPDIVSSLNKDQIDWFVHGDFAKDFWKEPTNLKREVDFSSLLSARTLFKDFSDPDAKILVHGTIDGYFVAKNGIILFDYKTDHVNKTNIDKSIELIKEKYTGQLRLYEQALNEFSEKKVIGKYLILLDAKQVVEVK</sequence>
<gene>
    <name evidence="1" type="primary">addA</name>
    <name type="ordered locus">lhv_1273</name>
</gene>
<name>ADDA_LACH4</name>
<comment type="function">
    <text evidence="1">The heterodimer acts as both an ATP-dependent DNA helicase and an ATP-dependent, dual-direction single-stranded exonuclease. Recognizes the chi site generating a DNA molecule suitable for the initiation of homologous recombination. The AddA nuclease domain is required for chi fragment generation; this subunit has the helicase and 3' -&gt; 5' nuclease activities.</text>
</comment>
<comment type="catalytic activity">
    <reaction evidence="1">
        <text>Couples ATP hydrolysis with the unwinding of duplex DNA by translocating in the 3'-5' direction.</text>
        <dbReference type="EC" id="5.6.2.4"/>
    </reaction>
</comment>
<comment type="catalytic activity">
    <reaction evidence="1">
        <text>ATP + H2O = ADP + phosphate + H(+)</text>
        <dbReference type="Rhea" id="RHEA:13065"/>
        <dbReference type="ChEBI" id="CHEBI:15377"/>
        <dbReference type="ChEBI" id="CHEBI:15378"/>
        <dbReference type="ChEBI" id="CHEBI:30616"/>
        <dbReference type="ChEBI" id="CHEBI:43474"/>
        <dbReference type="ChEBI" id="CHEBI:456216"/>
        <dbReference type="EC" id="5.6.2.4"/>
    </reaction>
</comment>
<comment type="cofactor">
    <cofactor evidence="1">
        <name>Mg(2+)</name>
        <dbReference type="ChEBI" id="CHEBI:18420"/>
    </cofactor>
</comment>
<comment type="subunit">
    <text evidence="1">Heterodimer of AddA and AddB/RexB.</text>
</comment>
<comment type="similarity">
    <text evidence="1">Belongs to the helicase family. AddA subfamily.</text>
</comment>
<keyword id="KW-0067">ATP-binding</keyword>
<keyword id="KW-0227">DNA damage</keyword>
<keyword id="KW-0234">DNA repair</keyword>
<keyword id="KW-0238">DNA-binding</keyword>
<keyword id="KW-0269">Exonuclease</keyword>
<keyword id="KW-0347">Helicase</keyword>
<keyword id="KW-0378">Hydrolase</keyword>
<keyword id="KW-0413">Isomerase</keyword>
<keyword id="KW-0540">Nuclease</keyword>
<keyword id="KW-0547">Nucleotide-binding</keyword>
<dbReference type="EC" id="3.1.-.-" evidence="1"/>
<dbReference type="EC" id="5.6.2.4" evidence="1"/>
<dbReference type="EMBL" id="CP000517">
    <property type="protein sequence ID" value="ABX27287.1"/>
    <property type="molecule type" value="Genomic_DNA"/>
</dbReference>
<dbReference type="RefSeq" id="WP_012211953.1">
    <property type="nucleotide sequence ID" value="NC_010080.1"/>
</dbReference>
<dbReference type="SMR" id="A8YVK0"/>
<dbReference type="KEGG" id="lhe:lhv_1273"/>
<dbReference type="eggNOG" id="COG1074">
    <property type="taxonomic scope" value="Bacteria"/>
</dbReference>
<dbReference type="HOGENOM" id="CLU_001114_3_1_9"/>
<dbReference type="Proteomes" id="UP000000790">
    <property type="component" value="Chromosome"/>
</dbReference>
<dbReference type="GO" id="GO:0005829">
    <property type="term" value="C:cytosol"/>
    <property type="evidence" value="ECO:0007669"/>
    <property type="project" value="TreeGrafter"/>
</dbReference>
<dbReference type="GO" id="GO:0033202">
    <property type="term" value="C:DNA helicase complex"/>
    <property type="evidence" value="ECO:0007669"/>
    <property type="project" value="TreeGrafter"/>
</dbReference>
<dbReference type="GO" id="GO:0043138">
    <property type="term" value="F:3'-5' DNA helicase activity"/>
    <property type="evidence" value="ECO:0007669"/>
    <property type="project" value="UniProtKB-UniRule"/>
</dbReference>
<dbReference type="GO" id="GO:0008408">
    <property type="term" value="F:3'-5' exonuclease activity"/>
    <property type="evidence" value="ECO:0007669"/>
    <property type="project" value="UniProtKB-UniRule"/>
</dbReference>
<dbReference type="GO" id="GO:0005524">
    <property type="term" value="F:ATP binding"/>
    <property type="evidence" value="ECO:0007669"/>
    <property type="project" value="UniProtKB-UniRule"/>
</dbReference>
<dbReference type="GO" id="GO:0016887">
    <property type="term" value="F:ATP hydrolysis activity"/>
    <property type="evidence" value="ECO:0007669"/>
    <property type="project" value="RHEA"/>
</dbReference>
<dbReference type="GO" id="GO:0003690">
    <property type="term" value="F:double-stranded DNA binding"/>
    <property type="evidence" value="ECO:0007669"/>
    <property type="project" value="UniProtKB-UniRule"/>
</dbReference>
<dbReference type="GO" id="GO:0000724">
    <property type="term" value="P:double-strand break repair via homologous recombination"/>
    <property type="evidence" value="ECO:0007669"/>
    <property type="project" value="UniProtKB-UniRule"/>
</dbReference>
<dbReference type="CDD" id="cd17932">
    <property type="entry name" value="DEXQc_UvrD"/>
    <property type="match status" value="1"/>
</dbReference>
<dbReference type="Gene3D" id="3.90.320.10">
    <property type="match status" value="1"/>
</dbReference>
<dbReference type="Gene3D" id="3.40.50.300">
    <property type="entry name" value="P-loop containing nucleotide triphosphate hydrolases"/>
    <property type="match status" value="4"/>
</dbReference>
<dbReference type="HAMAP" id="MF_01451">
    <property type="entry name" value="AddA"/>
    <property type="match status" value="1"/>
</dbReference>
<dbReference type="InterPro" id="IPR014152">
    <property type="entry name" value="AddA"/>
</dbReference>
<dbReference type="InterPro" id="IPR014017">
    <property type="entry name" value="DNA_helicase_UvrD-like_C"/>
</dbReference>
<dbReference type="InterPro" id="IPR000212">
    <property type="entry name" value="DNA_helicase_UvrD/REP"/>
</dbReference>
<dbReference type="InterPro" id="IPR027417">
    <property type="entry name" value="P-loop_NTPase"/>
</dbReference>
<dbReference type="InterPro" id="IPR011604">
    <property type="entry name" value="PDDEXK-like_dom_sf"/>
</dbReference>
<dbReference type="InterPro" id="IPR011335">
    <property type="entry name" value="Restrct_endonuc-II-like"/>
</dbReference>
<dbReference type="InterPro" id="IPR014016">
    <property type="entry name" value="UvrD-like_ATP-bd"/>
</dbReference>
<dbReference type="NCBIfam" id="TIGR02785">
    <property type="entry name" value="addA_Gpos"/>
    <property type="match status" value="1"/>
</dbReference>
<dbReference type="PANTHER" id="PTHR11070:SF48">
    <property type="entry name" value="ATP-DEPENDENT HELICASE_NUCLEASE SUBUNIT A"/>
    <property type="match status" value="1"/>
</dbReference>
<dbReference type="PANTHER" id="PTHR11070">
    <property type="entry name" value="UVRD / RECB / PCRA DNA HELICASE FAMILY MEMBER"/>
    <property type="match status" value="1"/>
</dbReference>
<dbReference type="Pfam" id="PF00580">
    <property type="entry name" value="UvrD-helicase"/>
    <property type="match status" value="1"/>
</dbReference>
<dbReference type="Pfam" id="PF13361">
    <property type="entry name" value="UvrD_C"/>
    <property type="match status" value="1"/>
</dbReference>
<dbReference type="SUPFAM" id="SSF52540">
    <property type="entry name" value="P-loop containing nucleoside triphosphate hydrolases"/>
    <property type="match status" value="1"/>
</dbReference>
<dbReference type="SUPFAM" id="SSF52980">
    <property type="entry name" value="Restriction endonuclease-like"/>
    <property type="match status" value="1"/>
</dbReference>
<dbReference type="PROSITE" id="PS51198">
    <property type="entry name" value="UVRD_HELICASE_ATP_BIND"/>
    <property type="match status" value="1"/>
</dbReference>
<dbReference type="PROSITE" id="PS51217">
    <property type="entry name" value="UVRD_HELICASE_CTER"/>
    <property type="match status" value="1"/>
</dbReference>
<evidence type="ECO:0000255" key="1">
    <source>
        <dbReference type="HAMAP-Rule" id="MF_01451"/>
    </source>
</evidence>
<organism>
    <name type="scientific">Lactobacillus helveticus (strain DPC 4571)</name>
    <dbReference type="NCBI Taxonomy" id="405566"/>
    <lineage>
        <taxon>Bacteria</taxon>
        <taxon>Bacillati</taxon>
        <taxon>Bacillota</taxon>
        <taxon>Bacilli</taxon>
        <taxon>Lactobacillales</taxon>
        <taxon>Lactobacillaceae</taxon>
        <taxon>Lactobacillus</taxon>
    </lineage>
</organism>
<reference key="1">
    <citation type="journal article" date="2008" name="J. Bacteriol.">
        <title>Genome sequence of Lactobacillus helveticus: an organism distinguished by selective gene loss and IS element expansion.</title>
        <authorList>
            <person name="Callanan M."/>
            <person name="Kaleta P."/>
            <person name="O'Callaghan J."/>
            <person name="O'Sullivan O."/>
            <person name="Jordan K."/>
            <person name="McAuliffe O."/>
            <person name="Sangrador-Vegas A."/>
            <person name="Slattery L."/>
            <person name="Fitzgerald G.F."/>
            <person name="Beresford T."/>
            <person name="Ross R.P."/>
        </authorList>
    </citation>
    <scope>NUCLEOTIDE SEQUENCE [LARGE SCALE GENOMIC DNA]</scope>
    <source>
        <strain>DPC 4571</strain>
    </source>
</reference>
<protein>
    <recommendedName>
        <fullName evidence="1">ATP-dependent helicase/nuclease subunit A</fullName>
        <ecNumber evidence="1">3.1.-.-</ecNumber>
        <ecNumber evidence="1">5.6.2.4</ecNumber>
    </recommendedName>
    <alternativeName>
        <fullName evidence="1">ATP-dependent helicase/nuclease AddA</fullName>
    </alternativeName>
    <alternativeName>
        <fullName evidence="1">DNA 3'-5' helicase AddA</fullName>
    </alternativeName>
</protein>
<proteinExistence type="inferred from homology"/>
<accession>A8YVK0</accession>
<feature type="chain" id="PRO_0000379283" description="ATP-dependent helicase/nuclease subunit A">
    <location>
        <begin position="1"/>
        <end position="1204"/>
    </location>
</feature>
<feature type="domain" description="UvrD-like helicase ATP-binding" evidence="1">
    <location>
        <begin position="2"/>
        <end position="472"/>
    </location>
</feature>
<feature type="domain" description="UvrD-like helicase C-terminal" evidence="1">
    <location>
        <begin position="500"/>
        <end position="783"/>
    </location>
</feature>
<feature type="binding site" evidence="1">
    <location>
        <begin position="23"/>
        <end position="30"/>
    </location>
    <ligand>
        <name>ATP</name>
        <dbReference type="ChEBI" id="CHEBI:30616"/>
    </ligand>
</feature>